<accession>I1R9B5</accession>
<accession>A0A098D0B1</accession>
<dbReference type="EC" id="1.14.-.-" evidence="5"/>
<dbReference type="EMBL" id="HG970332">
    <property type="protein sequence ID" value="CEF71877.1"/>
    <property type="molecule type" value="Genomic_DNA"/>
</dbReference>
<dbReference type="RefSeq" id="XP_011315637.1">
    <property type="nucleotide sequence ID" value="XM_011317335.1"/>
</dbReference>
<dbReference type="SMR" id="I1R9B5"/>
<dbReference type="STRING" id="229533.I1R9B5"/>
<dbReference type="GeneID" id="23547564"/>
<dbReference type="KEGG" id="fgr:FGSG_00048"/>
<dbReference type="VEuPathDB" id="FungiDB:FGRAMPH1_01G00155"/>
<dbReference type="eggNOG" id="KOG0143">
    <property type="taxonomic scope" value="Eukaryota"/>
</dbReference>
<dbReference type="HOGENOM" id="CLU_010119_1_1_1"/>
<dbReference type="InParanoid" id="I1R9B5"/>
<dbReference type="OrthoDB" id="96408at110618"/>
<dbReference type="Proteomes" id="UP000070720">
    <property type="component" value="Chromosome 1"/>
</dbReference>
<dbReference type="GO" id="GO:0051213">
    <property type="term" value="F:dioxygenase activity"/>
    <property type="evidence" value="ECO:0007669"/>
    <property type="project" value="UniProtKB-KW"/>
</dbReference>
<dbReference type="GO" id="GO:0046872">
    <property type="term" value="F:metal ion binding"/>
    <property type="evidence" value="ECO:0007669"/>
    <property type="project" value="UniProtKB-KW"/>
</dbReference>
<dbReference type="GO" id="GO:0044283">
    <property type="term" value="P:small molecule biosynthetic process"/>
    <property type="evidence" value="ECO:0007669"/>
    <property type="project" value="UniProtKB-ARBA"/>
</dbReference>
<dbReference type="Gene3D" id="2.60.120.330">
    <property type="entry name" value="B-lactam Antibiotic, Isopenicillin N Synthase, Chain"/>
    <property type="match status" value="1"/>
</dbReference>
<dbReference type="InterPro" id="IPR026992">
    <property type="entry name" value="DIOX_N"/>
</dbReference>
<dbReference type="InterPro" id="IPR044861">
    <property type="entry name" value="IPNS-like_FE2OG_OXY"/>
</dbReference>
<dbReference type="InterPro" id="IPR027443">
    <property type="entry name" value="IPNS-like_sf"/>
</dbReference>
<dbReference type="InterPro" id="IPR005123">
    <property type="entry name" value="Oxoglu/Fe-dep_dioxygenase_dom"/>
</dbReference>
<dbReference type="PANTHER" id="PTHR10209:SF812">
    <property type="entry name" value="2OG-FE(II) OXYGENASE FAMILY, PUTATIVE (AFU_ORTHOLOGUE AFUA_3G14880)-RELATED"/>
    <property type="match status" value="1"/>
</dbReference>
<dbReference type="PANTHER" id="PTHR10209">
    <property type="entry name" value="OXIDOREDUCTASE, 2OG-FE II OXYGENASE FAMILY PROTEIN"/>
    <property type="match status" value="1"/>
</dbReference>
<dbReference type="Pfam" id="PF03171">
    <property type="entry name" value="2OG-FeII_Oxy"/>
    <property type="match status" value="1"/>
</dbReference>
<dbReference type="Pfam" id="PF14226">
    <property type="entry name" value="DIOX_N"/>
    <property type="match status" value="1"/>
</dbReference>
<dbReference type="SUPFAM" id="SSF51197">
    <property type="entry name" value="Clavaminate synthase-like"/>
    <property type="match status" value="1"/>
</dbReference>
<dbReference type="PROSITE" id="PS51471">
    <property type="entry name" value="FE2OG_OXY"/>
    <property type="match status" value="1"/>
</dbReference>
<comment type="function">
    <text evidence="2 5">2-oxoglutarate-dependent dioxygenase; part of the gene cluster that mediates the biosynthesis of gramillins A and B, bicyclic lipopeptides that induce cell death in maize leaves but not in wheat leaves (PubMed:30395461). The nonribosomal peptide synthetase GRA1 incorporates respectively a glutamic adic (Glu), a leucine (Leu), a serine (Ser), a hydroxyglutamine (HOGln), a 2-amino decanoic acid, and 2 cysteins (CysB and CysA) (Probable). The biosynthesis of 2-amino decanoic acid incorporated in gramillins could be initiated by a fatty acid synthase composed of the alpha and beta subunits FGSG_00036 and FGSG_11656 (Probable). The cytochrome P450 monooxygenase FGSG_15680 could hydroxylate the fatty acid chain (Probable). Subsequent oxidation to the ketone by the oxidoreductase FGSG_00048 and transamination by aminotransferase FGSG_00049 could form 2-amino-decanoic acid (Probable). On the other hand, FGSG_15680 could also be responsible for the HO-modified glutamine at the gamma-position (Probable). Whether hydroxylation occurs on the fully assembled product or on the Gln residue prior to assembly into the gramillins requires further proof (Probable). The thioredoxin FGSG_00043 could also be required for the disulfide-bond formation between CysA and CysB (Probable). The specific involvement of the remaining proteins from the cluster is more difficult to discern, but could have broader regulatory (FGSG_00040 and FGSG_11657) or enzymatic functions (FGSG_00044 and FGSG_00045) (Probable). The final C-domain of GRA1 does not possess the expected sequence of a termination CT domain, often implicated in macrocyclization and release of a cyclopeptidein fungal NRPs; and the thioesterase FGSG_00047 may act in concert with the terminal C-domain of GRA1 to catalyze the formation of the macrocyclic anhydride and release of the products (Probable).</text>
</comment>
<comment type="cofactor">
    <cofactor evidence="1">
        <name>Fe(2+)</name>
        <dbReference type="ChEBI" id="CHEBI:29033"/>
    </cofactor>
    <text evidence="1">Binds 1 Fe(2+) ion per subunit.</text>
</comment>
<comment type="pathway">
    <text evidence="5">Mycotoxin biosynthesis.</text>
</comment>
<comment type="similarity">
    <text evidence="4">Belongs to the iron/ascorbate-dependent oxidoreductase family.</text>
</comment>
<evidence type="ECO:0000255" key="1">
    <source>
        <dbReference type="PROSITE-ProRule" id="PRU00805"/>
    </source>
</evidence>
<evidence type="ECO:0000269" key="2">
    <source>
    </source>
</evidence>
<evidence type="ECO:0000303" key="3">
    <source>
    </source>
</evidence>
<evidence type="ECO:0000305" key="4"/>
<evidence type="ECO:0000305" key="5">
    <source>
    </source>
</evidence>
<protein>
    <recommendedName>
        <fullName evidence="3">2-oxoglutarate-dependent dioxygenase FGSG_00048</fullName>
        <ecNumber evidence="5">1.14.-.-</ecNumber>
    </recommendedName>
    <alternativeName>
        <fullName evidence="3">Gramillins biosynthesis cluster protein FGSG_00048</fullName>
    </alternativeName>
</protein>
<keyword id="KW-0223">Dioxygenase</keyword>
<keyword id="KW-0408">Iron</keyword>
<keyword id="KW-0479">Metal-binding</keyword>
<keyword id="KW-0560">Oxidoreductase</keyword>
<keyword id="KW-1185">Reference proteome</keyword>
<keyword id="KW-0843">Virulence</keyword>
<proteinExistence type="inferred from homology"/>
<reference key="1">
    <citation type="journal article" date="2007" name="Science">
        <title>The Fusarium graminearum genome reveals a link between localized polymorphism and pathogen specialization.</title>
        <authorList>
            <person name="Cuomo C.A."/>
            <person name="Gueldener U."/>
            <person name="Xu J.-R."/>
            <person name="Trail F."/>
            <person name="Turgeon B.G."/>
            <person name="Di Pietro A."/>
            <person name="Walton J.D."/>
            <person name="Ma L.-J."/>
            <person name="Baker S.E."/>
            <person name="Rep M."/>
            <person name="Adam G."/>
            <person name="Antoniw J."/>
            <person name="Baldwin T."/>
            <person name="Calvo S.E."/>
            <person name="Chang Y.-L."/>
            <person name="DeCaprio D."/>
            <person name="Gale L.R."/>
            <person name="Gnerre S."/>
            <person name="Goswami R.S."/>
            <person name="Hammond-Kosack K."/>
            <person name="Harris L.J."/>
            <person name="Hilburn K."/>
            <person name="Kennell J.C."/>
            <person name="Kroken S."/>
            <person name="Magnuson J.K."/>
            <person name="Mannhaupt G."/>
            <person name="Mauceli E.W."/>
            <person name="Mewes H.-W."/>
            <person name="Mitterbauer R."/>
            <person name="Muehlbauer G."/>
            <person name="Muensterkoetter M."/>
            <person name="Nelson D."/>
            <person name="O'Donnell K."/>
            <person name="Ouellet T."/>
            <person name="Qi W."/>
            <person name="Quesneville H."/>
            <person name="Roncero M.I.G."/>
            <person name="Seong K.-Y."/>
            <person name="Tetko I.V."/>
            <person name="Urban M."/>
            <person name="Waalwijk C."/>
            <person name="Ward T.J."/>
            <person name="Yao J."/>
            <person name="Birren B.W."/>
            <person name="Kistler H.C."/>
        </authorList>
    </citation>
    <scope>NUCLEOTIDE SEQUENCE [LARGE SCALE GENOMIC DNA]</scope>
    <source>
        <strain>ATCC MYA-4620 / CBS 123657 / FGSC 9075 / NRRL 31084 / PH-1</strain>
    </source>
</reference>
<reference key="2">
    <citation type="journal article" date="2010" name="Nature">
        <title>Comparative genomics reveals mobile pathogenicity chromosomes in Fusarium.</title>
        <authorList>
            <person name="Ma L.-J."/>
            <person name="van der Does H.C."/>
            <person name="Borkovich K.A."/>
            <person name="Coleman J.J."/>
            <person name="Daboussi M.-J."/>
            <person name="Di Pietro A."/>
            <person name="Dufresne M."/>
            <person name="Freitag M."/>
            <person name="Grabherr M."/>
            <person name="Henrissat B."/>
            <person name="Houterman P.M."/>
            <person name="Kang S."/>
            <person name="Shim W.-B."/>
            <person name="Woloshuk C."/>
            <person name="Xie X."/>
            <person name="Xu J.-R."/>
            <person name="Antoniw J."/>
            <person name="Baker S.E."/>
            <person name="Bluhm B.H."/>
            <person name="Breakspear A."/>
            <person name="Brown D.W."/>
            <person name="Butchko R.A.E."/>
            <person name="Chapman S."/>
            <person name="Coulson R."/>
            <person name="Coutinho P.M."/>
            <person name="Danchin E.G.J."/>
            <person name="Diener A."/>
            <person name="Gale L.R."/>
            <person name="Gardiner D.M."/>
            <person name="Goff S."/>
            <person name="Hammond-Kosack K.E."/>
            <person name="Hilburn K."/>
            <person name="Hua-Van A."/>
            <person name="Jonkers W."/>
            <person name="Kazan K."/>
            <person name="Kodira C.D."/>
            <person name="Koehrsen M."/>
            <person name="Kumar L."/>
            <person name="Lee Y.-H."/>
            <person name="Li L."/>
            <person name="Manners J.M."/>
            <person name="Miranda-Saavedra D."/>
            <person name="Mukherjee M."/>
            <person name="Park G."/>
            <person name="Park J."/>
            <person name="Park S.-Y."/>
            <person name="Proctor R.H."/>
            <person name="Regev A."/>
            <person name="Ruiz-Roldan M.C."/>
            <person name="Sain D."/>
            <person name="Sakthikumar S."/>
            <person name="Sykes S."/>
            <person name="Schwartz D.C."/>
            <person name="Turgeon B.G."/>
            <person name="Wapinski I."/>
            <person name="Yoder O."/>
            <person name="Young S."/>
            <person name="Zeng Q."/>
            <person name="Zhou S."/>
            <person name="Galagan J."/>
            <person name="Cuomo C.A."/>
            <person name="Kistler H.C."/>
            <person name="Rep M."/>
        </authorList>
    </citation>
    <scope>GENOME REANNOTATION</scope>
    <source>
        <strain>ATCC MYA-4620 / CBS 123657 / FGSC 9075 / NRRL 31084 / PH-1</strain>
    </source>
</reference>
<reference key="3">
    <citation type="journal article" date="2015" name="BMC Genomics">
        <title>The completed genome sequence of the pathogenic ascomycete fungus Fusarium graminearum.</title>
        <authorList>
            <person name="King R."/>
            <person name="Urban M."/>
            <person name="Hammond-Kosack M.C.U."/>
            <person name="Hassani-Pak K."/>
            <person name="Hammond-Kosack K.E."/>
        </authorList>
    </citation>
    <scope>NUCLEOTIDE SEQUENCE [LARGE SCALE GENOMIC DNA]</scope>
    <source>
        <strain>ATCC MYA-4620 / CBS 123657 / FGSC 9075 / NRRL 31084 / PH-1</strain>
    </source>
</reference>
<reference key="4">
    <citation type="journal article" date="2018" name="J. Am. Chem. Soc.">
        <title>Gramillin A and B: cyclic lipopeptides identified as the nonribosomal biosynthetic products of Fusarium graminearum.</title>
        <authorList>
            <person name="Bahadoor A."/>
            <person name="Brauer E.K."/>
            <person name="Bosnich W."/>
            <person name="Schneiderman D."/>
            <person name="Johnston A."/>
            <person name="Aubin Y."/>
            <person name="Blackwell B."/>
            <person name="Melanson J.E."/>
            <person name="Harris L.J."/>
        </authorList>
    </citation>
    <scope>FUNCTION</scope>
    <scope>PATHWAY</scope>
</reference>
<gene>
    <name type="ORF">FG00048</name>
    <name type="ORF">FGRAMPH1_01T00155</name>
    <name type="ORF">FGSG_00048</name>
</gene>
<sequence>MASNFTSIPVLDYPSSLSPSTKPAFLAELRDALVKVGFFQVRDPPIPLKLQQDALRLSAQFFDLPTEKKLDIENVHSKRFLGYSRINSESTASGTDYLESILLGPNLPELGPEEPVYLHLQGPSQWPDEVSVPGFRDVLESYHSQIQDFSIEFARLIAEALEMPLDTLTKLLGQPLFSRLKPTRYLPPSMNPAAEDGSHGIGPHKDIAFMTYLLQGGTHNCLEVQNKLGHWVPVPPVPGALVVNIGRLLEVITGGVCVATTHRVILKRQGFVDGDGKSLGPRISLPFFQFVNPRLTVDDVLVDVPHHIKDLVPDQVATTEAETFFSGLFNNCIGDNIFVNHLTTYPRVGKRWYPDLMQLASEKQAESKRLDEQRRATEGHI</sequence>
<name>GRA15_GIBZE</name>
<feature type="chain" id="PRO_0000450566" description="2-oxoglutarate-dependent dioxygenase FGSG_00048">
    <location>
        <begin position="1"/>
        <end position="381"/>
    </location>
</feature>
<organism>
    <name type="scientific">Gibberella zeae (strain ATCC MYA-4620 / CBS 123657 / FGSC 9075 / NRRL 31084 / PH-1)</name>
    <name type="common">Wheat head blight fungus</name>
    <name type="synonym">Fusarium graminearum</name>
    <dbReference type="NCBI Taxonomy" id="229533"/>
    <lineage>
        <taxon>Eukaryota</taxon>
        <taxon>Fungi</taxon>
        <taxon>Dikarya</taxon>
        <taxon>Ascomycota</taxon>
        <taxon>Pezizomycotina</taxon>
        <taxon>Sordariomycetes</taxon>
        <taxon>Hypocreomycetidae</taxon>
        <taxon>Hypocreales</taxon>
        <taxon>Nectriaceae</taxon>
        <taxon>Fusarium</taxon>
    </lineage>
</organism>